<sequence>MIIKRKLKTLKRCNSTNEEDDIVRKKRKVNLNGGGSGGDYYYPLNLLGEIGAGIVPGKNGFSVSLCKQVSCSPKVEVVEEEEEEEEIKSTRLVSRPPLVKTSRGRVQVLPSRFNDSVIENWRKDNKSSGEEREEEIEEEACRKEKVKVSSNHSLKIKQQETKFTPRNYKYSSSSALCGEIDDEDKCEEIVRYGNSFEMKKQRYVDDEPRPKKEGVYGPEDFYSGDLVWGKSGRNEPFWPAIVIDPMTQAPELVLRSCIPDAACVMFFGHSGTENERDYAWVRRGMIFPFVDYVERLQEQSELRGCNPRDFQMALEEALLADQGFTEKLMQDIHMAAGNQTFDDSVYRWVEEAAGSSQYLDHVAPSQDMKKYRNPRACVGCGMVLSFKMAQKMKALIPGDQLLCQPCSKLTKPKHVCGICKRIWNHLDSQSWVRCDGCKVWIHSACDQISHKHFKDLGETDYYCPTCRTKFDFELSDSEKPDSKSKLGKNNAPMVLPDKVIVVCSGVEGIYFPSLHLVVCKCGSCGPERKALSEWERHTGSKAKNWRTSVKVKSSKLPLEEWMMKLAEFHANATAAKPPKRPSIKQRKQRLLSFLREKYEPVNVKWTTERCAVCRWVEDWDYNKIIICNRCQIAVHQECYGTRNVRDFTSWVCKACETPEIKRECCLCPVKGGALKPTDVETLWVHVTCAWFQPEVCFASEEKMEPALGILSIPSSNFVKICVICKQIHGSCTQCCKCSTYYHAMCASRAGYRMELHCLEKNGRQITKMVSYCSYHRAPNPDTVLIIQTPSGVFSAKSLVQNKKKSGTRLILANREEIEESAAEDTIPIDPFSSARCRLYKRTVNSKKRTKEEGIPHYTGGLRHHPSAAIQTLNAFRHVAEEPKSFSSFRERLHHLQRTEMERVCFGRSGIHGWGLFARRNIQEGEMVLEYRGEQVRGIIADLREARYRREGKDCYLFKISEEVVVDATEKGNIARLINHSCMPNCYARIMSVGDDESRIVLIAKTTVASCEELTYDYLFDPDEPDEFKVPCLCKSPNCRKFMN</sequence>
<dbReference type="EC" id="2.1.1.-"/>
<dbReference type="EMBL" id="AB020754">
    <property type="protein sequence ID" value="BAA97320.1"/>
    <property type="status" value="ALT_SEQ"/>
    <property type="molecule type" value="Genomic_DNA"/>
</dbReference>
<dbReference type="EMBL" id="CP002688">
    <property type="protein sequence ID" value="AED96353.1"/>
    <property type="molecule type" value="Genomic_DNA"/>
</dbReference>
<dbReference type="EMBL" id="AK117221">
    <property type="protein sequence ID" value="BAC41897.1"/>
    <property type="molecule type" value="mRNA"/>
</dbReference>
<dbReference type="EMBL" id="BT005981">
    <property type="protein sequence ID" value="AAO64916.1"/>
    <property type="molecule type" value="mRNA"/>
</dbReference>
<dbReference type="EMBL" id="AY049755">
    <property type="protein sequence ID" value="AAL12216.1"/>
    <property type="molecule type" value="mRNA"/>
</dbReference>
<dbReference type="RefSeq" id="NP_200155.2">
    <property type="nucleotide sequence ID" value="NM_124722.3"/>
</dbReference>
<dbReference type="SMR" id="Q8GZ42"/>
<dbReference type="FunCoup" id="Q8GZ42">
    <property type="interactions" value="698"/>
</dbReference>
<dbReference type="STRING" id="3702.Q8GZ42"/>
<dbReference type="iPTMnet" id="Q8GZ42"/>
<dbReference type="PaxDb" id="3702-AT5G53430.1"/>
<dbReference type="ProteomicsDB" id="240922"/>
<dbReference type="EnsemblPlants" id="AT5G53430.1">
    <property type="protein sequence ID" value="AT5G53430.1"/>
    <property type="gene ID" value="AT5G53430"/>
</dbReference>
<dbReference type="GeneID" id="835424"/>
<dbReference type="Gramene" id="AT5G53430.1">
    <property type="protein sequence ID" value="AT5G53430.1"/>
    <property type="gene ID" value="AT5G53430"/>
</dbReference>
<dbReference type="KEGG" id="ath:AT5G53430"/>
<dbReference type="Araport" id="AT5G53430"/>
<dbReference type="TAIR" id="AT5G53430">
    <property type="gene designation" value="SDG29"/>
</dbReference>
<dbReference type="eggNOG" id="KOG1080">
    <property type="taxonomic scope" value="Eukaryota"/>
</dbReference>
<dbReference type="HOGENOM" id="CLU_006335_0_0_1"/>
<dbReference type="InParanoid" id="Q8GZ42"/>
<dbReference type="OMA" id="DITRECC"/>
<dbReference type="PhylomeDB" id="Q8GZ42"/>
<dbReference type="PRO" id="PR:Q8GZ42"/>
<dbReference type="Proteomes" id="UP000006548">
    <property type="component" value="Chromosome 5"/>
</dbReference>
<dbReference type="ExpressionAtlas" id="Q8GZ42">
    <property type="expression patterns" value="baseline and differential"/>
</dbReference>
<dbReference type="GO" id="GO:0031011">
    <property type="term" value="C:Ino80 complex"/>
    <property type="evidence" value="ECO:0000314"/>
    <property type="project" value="TAIR"/>
</dbReference>
<dbReference type="GO" id="GO:0009506">
    <property type="term" value="C:plasmodesma"/>
    <property type="evidence" value="ECO:0007005"/>
    <property type="project" value="TAIR"/>
</dbReference>
<dbReference type="GO" id="GO:0048188">
    <property type="term" value="C:Set1C/COMPASS complex"/>
    <property type="evidence" value="ECO:0000314"/>
    <property type="project" value="TAIR"/>
</dbReference>
<dbReference type="GO" id="GO:0042054">
    <property type="term" value="F:histone methyltransferase activity"/>
    <property type="evidence" value="ECO:0007669"/>
    <property type="project" value="RHEA"/>
</dbReference>
<dbReference type="GO" id="GO:0008270">
    <property type="term" value="F:zinc ion binding"/>
    <property type="evidence" value="ECO:0007669"/>
    <property type="project" value="UniProtKB-KW"/>
</dbReference>
<dbReference type="GO" id="GO:0009294">
    <property type="term" value="P:DNA-mediated transformation"/>
    <property type="evidence" value="ECO:0000315"/>
    <property type="project" value="TAIR"/>
</dbReference>
<dbReference type="GO" id="GO:0032259">
    <property type="term" value="P:methylation"/>
    <property type="evidence" value="ECO:0007669"/>
    <property type="project" value="UniProtKB-KW"/>
</dbReference>
<dbReference type="CDD" id="cd15663">
    <property type="entry name" value="ePHD_ATX3_4_5_like"/>
    <property type="match status" value="1"/>
</dbReference>
<dbReference type="CDD" id="cd15495">
    <property type="entry name" value="PHD_ATX3_4_5_like"/>
    <property type="match status" value="1"/>
</dbReference>
<dbReference type="CDD" id="cd15517">
    <property type="entry name" value="PHD_TCF19_like"/>
    <property type="match status" value="1"/>
</dbReference>
<dbReference type="CDD" id="cd20143">
    <property type="entry name" value="PWWP_AtATX3-like"/>
    <property type="match status" value="1"/>
</dbReference>
<dbReference type="CDD" id="cd10518">
    <property type="entry name" value="SET_SETD1-like"/>
    <property type="match status" value="1"/>
</dbReference>
<dbReference type="FunFam" id="2.170.270.10:FF:000058">
    <property type="entry name" value="Histone-lysine N-methyltransferase"/>
    <property type="match status" value="1"/>
</dbReference>
<dbReference type="FunFam" id="2.30.30.140:FF:000108">
    <property type="entry name" value="Histone-lysine N-methyltransferase"/>
    <property type="match status" value="1"/>
</dbReference>
<dbReference type="FunFam" id="3.30.40.10:FF:000454">
    <property type="entry name" value="Histone-lysine N-methyltransferase"/>
    <property type="match status" value="1"/>
</dbReference>
<dbReference type="FunFam" id="3.30.40.10:FF:000464">
    <property type="entry name" value="Histone-lysine N-methyltransferase"/>
    <property type="match status" value="1"/>
</dbReference>
<dbReference type="FunFam" id="3.30.40.10:FF:000519">
    <property type="entry name" value="Histone-lysine N-methyltransferase ATX4"/>
    <property type="match status" value="1"/>
</dbReference>
<dbReference type="Gene3D" id="2.30.30.140">
    <property type="match status" value="1"/>
</dbReference>
<dbReference type="Gene3D" id="2.170.270.10">
    <property type="entry name" value="SET domain"/>
    <property type="match status" value="1"/>
</dbReference>
<dbReference type="Gene3D" id="3.30.40.10">
    <property type="entry name" value="Zinc/RING finger domain, C3HC4 (zinc finger)"/>
    <property type="match status" value="3"/>
</dbReference>
<dbReference type="InterPro" id="IPR041955">
    <property type="entry name" value="ATX3/4/5_ePHD"/>
</dbReference>
<dbReference type="InterPro" id="IPR042011">
    <property type="entry name" value="ATX3/4/5_PHD"/>
</dbReference>
<dbReference type="InterPro" id="IPR034732">
    <property type="entry name" value="EPHD"/>
</dbReference>
<dbReference type="InterPro" id="IPR025780">
    <property type="entry name" value="Hist-Lys_N-MeTrfase_ATX"/>
</dbReference>
<dbReference type="InterPro" id="IPR050701">
    <property type="entry name" value="Histone_Mod_Regulator"/>
</dbReference>
<dbReference type="InterPro" id="IPR003616">
    <property type="entry name" value="Post-SET_dom"/>
</dbReference>
<dbReference type="InterPro" id="IPR000313">
    <property type="entry name" value="PWWP_dom"/>
</dbReference>
<dbReference type="InterPro" id="IPR001214">
    <property type="entry name" value="SET_dom"/>
</dbReference>
<dbReference type="InterPro" id="IPR046341">
    <property type="entry name" value="SET_dom_sf"/>
</dbReference>
<dbReference type="InterPro" id="IPR019786">
    <property type="entry name" value="Zinc_finger_PHD-type_CS"/>
</dbReference>
<dbReference type="InterPro" id="IPR011011">
    <property type="entry name" value="Znf_FYVE_PHD"/>
</dbReference>
<dbReference type="InterPro" id="IPR001965">
    <property type="entry name" value="Znf_PHD"/>
</dbReference>
<dbReference type="InterPro" id="IPR019787">
    <property type="entry name" value="Znf_PHD-finger"/>
</dbReference>
<dbReference type="InterPro" id="IPR013083">
    <property type="entry name" value="Znf_RING/FYVE/PHD"/>
</dbReference>
<dbReference type="PANTHER" id="PTHR13793:SF132">
    <property type="entry name" value="HISTONE-LYSINE N-METHYLTRANSFERASE ATX5"/>
    <property type="match status" value="1"/>
</dbReference>
<dbReference type="PANTHER" id="PTHR13793">
    <property type="entry name" value="PHD FINGER PROTEINS"/>
    <property type="match status" value="1"/>
</dbReference>
<dbReference type="Pfam" id="PF00628">
    <property type="entry name" value="PHD"/>
    <property type="match status" value="1"/>
</dbReference>
<dbReference type="Pfam" id="PF13831">
    <property type="entry name" value="PHD_2"/>
    <property type="match status" value="1"/>
</dbReference>
<dbReference type="Pfam" id="PF00855">
    <property type="entry name" value="PWWP"/>
    <property type="match status" value="1"/>
</dbReference>
<dbReference type="Pfam" id="PF00856">
    <property type="entry name" value="SET"/>
    <property type="match status" value="1"/>
</dbReference>
<dbReference type="Pfam" id="PF13832">
    <property type="entry name" value="zf-HC5HC2H_2"/>
    <property type="match status" value="1"/>
</dbReference>
<dbReference type="SMART" id="SM00249">
    <property type="entry name" value="PHD"/>
    <property type="match status" value="3"/>
</dbReference>
<dbReference type="SMART" id="SM00508">
    <property type="entry name" value="PostSET"/>
    <property type="match status" value="1"/>
</dbReference>
<dbReference type="SMART" id="SM00317">
    <property type="entry name" value="SET"/>
    <property type="match status" value="1"/>
</dbReference>
<dbReference type="SUPFAM" id="SSF57903">
    <property type="entry name" value="FYVE/PHD zinc finger"/>
    <property type="match status" value="2"/>
</dbReference>
<dbReference type="SUPFAM" id="SSF82199">
    <property type="entry name" value="SET domain"/>
    <property type="match status" value="1"/>
</dbReference>
<dbReference type="SUPFAM" id="SSF63748">
    <property type="entry name" value="Tudor/PWWP/MBT"/>
    <property type="match status" value="1"/>
</dbReference>
<dbReference type="PROSITE" id="PS51805">
    <property type="entry name" value="EPHD"/>
    <property type="match status" value="1"/>
</dbReference>
<dbReference type="PROSITE" id="PS50868">
    <property type="entry name" value="POST_SET"/>
    <property type="match status" value="1"/>
</dbReference>
<dbReference type="PROSITE" id="PS50812">
    <property type="entry name" value="PWWP"/>
    <property type="match status" value="1"/>
</dbReference>
<dbReference type="PROSITE" id="PS51566">
    <property type="entry name" value="SAM_MT43_TRX_MLL"/>
    <property type="match status" value="1"/>
</dbReference>
<dbReference type="PROSITE" id="PS50280">
    <property type="entry name" value="SET"/>
    <property type="match status" value="1"/>
</dbReference>
<dbReference type="PROSITE" id="PS01359">
    <property type="entry name" value="ZF_PHD_1"/>
    <property type="match status" value="1"/>
</dbReference>
<dbReference type="PROSITE" id="PS50016">
    <property type="entry name" value="ZF_PHD_2"/>
    <property type="match status" value="2"/>
</dbReference>
<organism>
    <name type="scientific">Arabidopsis thaliana</name>
    <name type="common">Mouse-ear cress</name>
    <dbReference type="NCBI Taxonomy" id="3702"/>
    <lineage>
        <taxon>Eukaryota</taxon>
        <taxon>Viridiplantae</taxon>
        <taxon>Streptophyta</taxon>
        <taxon>Embryophyta</taxon>
        <taxon>Tracheophyta</taxon>
        <taxon>Spermatophyta</taxon>
        <taxon>Magnoliopsida</taxon>
        <taxon>eudicotyledons</taxon>
        <taxon>Gunneridae</taxon>
        <taxon>Pentapetalae</taxon>
        <taxon>rosids</taxon>
        <taxon>malvids</taxon>
        <taxon>Brassicales</taxon>
        <taxon>Brassicaceae</taxon>
        <taxon>Camelineae</taxon>
        <taxon>Arabidopsis</taxon>
    </lineage>
</organism>
<keyword id="KW-0156">Chromatin regulator</keyword>
<keyword id="KW-0479">Metal-binding</keyword>
<keyword id="KW-0489">Methyltransferase</keyword>
<keyword id="KW-0539">Nucleus</keyword>
<keyword id="KW-1185">Reference proteome</keyword>
<keyword id="KW-0677">Repeat</keyword>
<keyword id="KW-0949">S-adenosyl-L-methionine</keyword>
<keyword id="KW-0808">Transferase</keyword>
<keyword id="KW-0862">Zinc</keyword>
<keyword id="KW-0863">Zinc-finger</keyword>
<name>ATX5_ARATH</name>
<gene>
    <name type="primary">ATX5</name>
    <name type="synonym">SDG29</name>
    <name type="synonym">SET29</name>
    <name type="ordered locus">At5g53430</name>
    <name type="ORF">MYN8.4</name>
</gene>
<reference key="1">
    <citation type="journal article" date="2000" name="DNA Res.">
        <title>Structural analysis of Arabidopsis thaliana chromosome 5. X. Sequence features of the regions of 3,076,755 bp covered by sixty P1 and TAC clones.</title>
        <authorList>
            <person name="Sato S."/>
            <person name="Nakamura Y."/>
            <person name="Kaneko T."/>
            <person name="Katoh T."/>
            <person name="Asamizu E."/>
            <person name="Kotani H."/>
            <person name="Tabata S."/>
        </authorList>
    </citation>
    <scope>NUCLEOTIDE SEQUENCE [LARGE SCALE GENOMIC DNA]</scope>
    <source>
        <strain>cv. Columbia</strain>
    </source>
</reference>
<reference key="2">
    <citation type="journal article" date="2017" name="Plant J.">
        <title>Araport11: a complete reannotation of the Arabidopsis thaliana reference genome.</title>
        <authorList>
            <person name="Cheng C.Y."/>
            <person name="Krishnakumar V."/>
            <person name="Chan A.P."/>
            <person name="Thibaud-Nissen F."/>
            <person name="Schobel S."/>
            <person name="Town C.D."/>
        </authorList>
    </citation>
    <scope>GENOME REANNOTATION</scope>
    <source>
        <strain>cv. Columbia</strain>
    </source>
</reference>
<reference key="3">
    <citation type="journal article" date="2002" name="Science">
        <title>Functional annotation of a full-length Arabidopsis cDNA collection.</title>
        <authorList>
            <person name="Seki M."/>
            <person name="Narusaka M."/>
            <person name="Kamiya A."/>
            <person name="Ishida J."/>
            <person name="Satou M."/>
            <person name="Sakurai T."/>
            <person name="Nakajima M."/>
            <person name="Enju A."/>
            <person name="Akiyama K."/>
            <person name="Oono Y."/>
            <person name="Muramatsu M."/>
            <person name="Hayashizaki Y."/>
            <person name="Kawai J."/>
            <person name="Carninci P."/>
            <person name="Itoh M."/>
            <person name="Ishii Y."/>
            <person name="Arakawa T."/>
            <person name="Shibata K."/>
            <person name="Shinagawa A."/>
            <person name="Shinozaki K."/>
        </authorList>
    </citation>
    <scope>NUCLEOTIDE SEQUENCE [LARGE SCALE MRNA]</scope>
    <source>
        <strain>cv. Columbia</strain>
    </source>
</reference>
<reference key="4">
    <citation type="journal article" date="2003" name="Science">
        <title>Empirical analysis of transcriptional activity in the Arabidopsis genome.</title>
        <authorList>
            <person name="Yamada K."/>
            <person name="Lim J."/>
            <person name="Dale J.M."/>
            <person name="Chen H."/>
            <person name="Shinn P."/>
            <person name="Palm C.J."/>
            <person name="Southwick A.M."/>
            <person name="Wu H.C."/>
            <person name="Kim C.J."/>
            <person name="Nguyen M."/>
            <person name="Pham P.K."/>
            <person name="Cheuk R.F."/>
            <person name="Karlin-Newmann G."/>
            <person name="Liu S.X."/>
            <person name="Lam B."/>
            <person name="Sakano H."/>
            <person name="Wu T."/>
            <person name="Yu G."/>
            <person name="Miranda M."/>
            <person name="Quach H.L."/>
            <person name="Tripp M."/>
            <person name="Chang C.H."/>
            <person name="Lee J.M."/>
            <person name="Toriumi M.J."/>
            <person name="Chan M.M."/>
            <person name="Tang C.C."/>
            <person name="Onodera C.S."/>
            <person name="Deng J.M."/>
            <person name="Akiyama K."/>
            <person name="Ansari Y."/>
            <person name="Arakawa T."/>
            <person name="Banh J."/>
            <person name="Banno F."/>
            <person name="Bowser L."/>
            <person name="Brooks S.Y."/>
            <person name="Carninci P."/>
            <person name="Chao Q."/>
            <person name="Choy N."/>
            <person name="Enju A."/>
            <person name="Goldsmith A.D."/>
            <person name="Gurjal M."/>
            <person name="Hansen N.F."/>
            <person name="Hayashizaki Y."/>
            <person name="Johnson-Hopson C."/>
            <person name="Hsuan V.W."/>
            <person name="Iida K."/>
            <person name="Karnes M."/>
            <person name="Khan S."/>
            <person name="Koesema E."/>
            <person name="Ishida J."/>
            <person name="Jiang P.X."/>
            <person name="Jones T."/>
            <person name="Kawai J."/>
            <person name="Kamiya A."/>
            <person name="Meyers C."/>
            <person name="Nakajima M."/>
            <person name="Narusaka M."/>
            <person name="Seki M."/>
            <person name="Sakurai T."/>
            <person name="Satou M."/>
            <person name="Tamse R."/>
            <person name="Vaysberg M."/>
            <person name="Wallender E.K."/>
            <person name="Wong C."/>
            <person name="Yamamura Y."/>
            <person name="Yuan S."/>
            <person name="Shinozaki K."/>
            <person name="Davis R.W."/>
            <person name="Theologis A."/>
            <person name="Ecker J.R."/>
        </authorList>
    </citation>
    <scope>NUCLEOTIDE SEQUENCE [LARGE SCALE MRNA]</scope>
    <source>
        <strain>cv. Columbia</strain>
    </source>
</reference>
<reference key="5">
    <citation type="journal article" date="2001" name="Nucleic Acids Res.">
        <title>The Arabidopsis thaliana genome contains at least 29 active genes encoding SET domain proteins that can be assigned to four evolutionarily conserved classes.</title>
        <authorList>
            <person name="Baumbusch L.O."/>
            <person name="Thorstensen T."/>
            <person name="Krauss V."/>
            <person name="Fischer A."/>
            <person name="Naumann K."/>
            <person name="Assalkhou R."/>
            <person name="Schulz I."/>
            <person name="Reuter G."/>
            <person name="Aalen R.B."/>
        </authorList>
    </citation>
    <scope>NUCLEOTIDE SEQUENCE [MRNA] OF 637-865</scope>
    <scope>NOMENCLATURE</scope>
</reference>
<proteinExistence type="evidence at transcript level"/>
<feature type="chain" id="PRO_0000233358" description="Histone-lysine N-methyltransferase ATX5">
    <location>
        <begin position="1"/>
        <end position="1043"/>
    </location>
</feature>
<feature type="domain" description="PWWP" evidence="3">
    <location>
        <begin position="223"/>
        <end position="292"/>
    </location>
</feature>
<feature type="domain" description="SET" evidence="4">
    <location>
        <begin position="901"/>
        <end position="1018"/>
    </location>
</feature>
<feature type="domain" description="Post-SET" evidence="2">
    <location>
        <begin position="1027"/>
        <end position="1043"/>
    </location>
</feature>
<feature type="zinc finger region" description="C2HC pre-PHD-type" evidence="5">
    <location>
        <begin position="661"/>
        <end position="695"/>
    </location>
</feature>
<feature type="zinc finger region" description="PHD-type 3" evidence="5">
    <location>
        <begin position="719"/>
        <end position="776"/>
    </location>
</feature>
<feature type="binding site" evidence="4">
    <location>
        <position position="911"/>
    </location>
    <ligand>
        <name>S-adenosyl-L-methionine</name>
        <dbReference type="ChEBI" id="CHEBI:59789"/>
    </ligand>
</feature>
<feature type="binding site" evidence="4">
    <location>
        <position position="955"/>
    </location>
    <ligand>
        <name>S-adenosyl-L-methionine</name>
        <dbReference type="ChEBI" id="CHEBI:59789"/>
    </ligand>
</feature>
<feature type="binding site" evidence="1">
    <location>
        <begin position="978"/>
        <end position="979"/>
    </location>
    <ligand>
        <name>S-adenosyl-L-methionine</name>
        <dbReference type="ChEBI" id="CHEBI:59789"/>
    </ligand>
</feature>
<feature type="binding site" evidence="1">
    <location>
        <position position="981"/>
    </location>
    <ligand>
        <name>Zn(2+)</name>
        <dbReference type="ChEBI" id="CHEBI:29105"/>
    </ligand>
</feature>
<feature type="binding site" evidence="1">
    <location>
        <position position="1031"/>
    </location>
    <ligand>
        <name>Zn(2+)</name>
        <dbReference type="ChEBI" id="CHEBI:29105"/>
    </ligand>
</feature>
<feature type="binding site" evidence="1">
    <location>
        <position position="1033"/>
    </location>
    <ligand>
        <name>Zn(2+)</name>
        <dbReference type="ChEBI" id="CHEBI:29105"/>
    </ligand>
</feature>
<feature type="binding site" evidence="1">
    <location>
        <position position="1038"/>
    </location>
    <ligand>
        <name>Zn(2+)</name>
        <dbReference type="ChEBI" id="CHEBI:29105"/>
    </ligand>
</feature>
<protein>
    <recommendedName>
        <fullName>Histone-lysine N-methyltransferase ATX5</fullName>
        <ecNumber>2.1.1.-</ecNumber>
    </recommendedName>
    <alternativeName>
        <fullName>Protein SET DOMAIN GROUP 29</fullName>
    </alternativeName>
    <alternativeName>
        <fullName>Trithorax-homolog protein 5</fullName>
        <shortName>TRX-homolog protein 5</shortName>
    </alternativeName>
</protein>
<accession>Q8GZ42</accession>
<accession>Q941G9</accession>
<accession>Q9LV06</accession>
<evidence type="ECO:0000250" key="1"/>
<evidence type="ECO:0000255" key="2">
    <source>
        <dbReference type="PROSITE-ProRule" id="PRU00155"/>
    </source>
</evidence>
<evidence type="ECO:0000255" key="3">
    <source>
        <dbReference type="PROSITE-ProRule" id="PRU00162"/>
    </source>
</evidence>
<evidence type="ECO:0000255" key="4">
    <source>
        <dbReference type="PROSITE-ProRule" id="PRU00190"/>
    </source>
</evidence>
<evidence type="ECO:0000255" key="5">
    <source>
        <dbReference type="PROSITE-ProRule" id="PRU01146"/>
    </source>
</evidence>
<evidence type="ECO:0000305" key="6"/>
<comment type="function">
    <text evidence="1">Histone methyltransferase.</text>
</comment>
<comment type="catalytic activity">
    <reaction>
        <text>L-lysyl-[histone] + S-adenosyl-L-methionine = N(6)-methyl-L-lysyl-[histone] + S-adenosyl-L-homocysteine + H(+)</text>
        <dbReference type="Rhea" id="RHEA:10024"/>
        <dbReference type="Rhea" id="RHEA-COMP:9845"/>
        <dbReference type="Rhea" id="RHEA-COMP:9846"/>
        <dbReference type="ChEBI" id="CHEBI:15378"/>
        <dbReference type="ChEBI" id="CHEBI:29969"/>
        <dbReference type="ChEBI" id="CHEBI:57856"/>
        <dbReference type="ChEBI" id="CHEBI:59789"/>
        <dbReference type="ChEBI" id="CHEBI:61929"/>
    </reaction>
</comment>
<comment type="subcellular location">
    <subcellularLocation>
        <location evidence="1">Nucleus</location>
    </subcellularLocation>
</comment>
<comment type="similarity">
    <text evidence="4">Belongs to the class V-like SAM-binding methyltransferase superfamily. Histone-lysine methyltransferase family. TRX/MLL subfamily.</text>
</comment>
<comment type="sequence caution" evidence="6">
    <conflict type="erroneous gene model prediction">
        <sequence resource="EMBL-CDS" id="BAA97320"/>
    </conflict>
</comment>